<protein>
    <recommendedName>
        <fullName>Ribonuclease pancreatic</fullName>
        <ecNumber>4.6.1.18</ecNumber>
    </recommendedName>
    <alternativeName>
        <fullName>RNase 1</fullName>
    </alternativeName>
    <alternativeName>
        <fullName>RNase A</fullName>
    </alternativeName>
</protein>
<evidence type="ECO:0000250" key="1"/>
<evidence type="ECO:0000256" key="2">
    <source>
        <dbReference type="SAM" id="MobiDB-lite"/>
    </source>
</evidence>
<evidence type="ECO:0000269" key="3">
    <source>
    </source>
</evidence>
<evidence type="ECO:0000305" key="4"/>
<proteinExistence type="evidence at protein level"/>
<dbReference type="EC" id="4.6.1.18"/>
<dbReference type="PIR" id="S07141">
    <property type="entry name" value="S07141"/>
</dbReference>
<dbReference type="SMR" id="P07847"/>
<dbReference type="GlyCosmos" id="P07847">
    <property type="glycosylation" value="1 site, No reported glycans"/>
</dbReference>
<dbReference type="iPTMnet" id="P07847"/>
<dbReference type="GO" id="GO:0005576">
    <property type="term" value="C:extracellular region"/>
    <property type="evidence" value="ECO:0007669"/>
    <property type="project" value="UniProtKB-SubCell"/>
</dbReference>
<dbReference type="GO" id="GO:0016829">
    <property type="term" value="F:lyase activity"/>
    <property type="evidence" value="ECO:0007669"/>
    <property type="project" value="UniProtKB-KW"/>
</dbReference>
<dbReference type="GO" id="GO:0003676">
    <property type="term" value="F:nucleic acid binding"/>
    <property type="evidence" value="ECO:0007669"/>
    <property type="project" value="InterPro"/>
</dbReference>
<dbReference type="GO" id="GO:0004522">
    <property type="term" value="F:ribonuclease A activity"/>
    <property type="evidence" value="ECO:0007669"/>
    <property type="project" value="UniProtKB-EC"/>
</dbReference>
<dbReference type="GO" id="GO:0050830">
    <property type="term" value="P:defense response to Gram-positive bacterium"/>
    <property type="evidence" value="ECO:0007669"/>
    <property type="project" value="TreeGrafter"/>
</dbReference>
<dbReference type="CDD" id="cd06265">
    <property type="entry name" value="RNase_A_canonical"/>
    <property type="match status" value="1"/>
</dbReference>
<dbReference type="FunFam" id="3.10.130.10:FF:000001">
    <property type="entry name" value="Ribonuclease pancreatic"/>
    <property type="match status" value="1"/>
</dbReference>
<dbReference type="Gene3D" id="3.10.130.10">
    <property type="entry name" value="Ribonuclease A-like domain"/>
    <property type="match status" value="1"/>
</dbReference>
<dbReference type="InterPro" id="IPR001427">
    <property type="entry name" value="RNaseA"/>
</dbReference>
<dbReference type="InterPro" id="IPR036816">
    <property type="entry name" value="RNaseA-like_dom_sf"/>
</dbReference>
<dbReference type="InterPro" id="IPR023411">
    <property type="entry name" value="RNaseA_AS"/>
</dbReference>
<dbReference type="InterPro" id="IPR023412">
    <property type="entry name" value="RNaseA_domain"/>
</dbReference>
<dbReference type="PANTHER" id="PTHR11437">
    <property type="entry name" value="RIBONUCLEASE"/>
    <property type="match status" value="1"/>
</dbReference>
<dbReference type="PANTHER" id="PTHR11437:SF24">
    <property type="entry name" value="RIBONUCLEASE PANCREATIC"/>
    <property type="match status" value="1"/>
</dbReference>
<dbReference type="Pfam" id="PF00074">
    <property type="entry name" value="RnaseA"/>
    <property type="match status" value="1"/>
</dbReference>
<dbReference type="PRINTS" id="PR00794">
    <property type="entry name" value="RIBONUCLEASE"/>
</dbReference>
<dbReference type="SMART" id="SM00092">
    <property type="entry name" value="RNAse_Pc"/>
    <property type="match status" value="1"/>
</dbReference>
<dbReference type="SUPFAM" id="SSF54076">
    <property type="entry name" value="RNase A-like"/>
    <property type="match status" value="1"/>
</dbReference>
<dbReference type="PROSITE" id="PS00127">
    <property type="entry name" value="RNASE_PANCREATIC"/>
    <property type="match status" value="1"/>
</dbReference>
<sequence length="124" mass="13678">KESAAAKFERQHMDSSTSSASSSNYCNQMMKSRNLTQSRCKPVNTFVHESLADVQAVCSQKNVACKNGQTNCYQSYSTMSITDCRETGSSKYPNCAYKTTQAKKHIIVACEGNPYVPVHFDASV</sequence>
<name>RNAS1_AEPME</name>
<keyword id="KW-0903">Direct protein sequencing</keyword>
<keyword id="KW-1015">Disulfide bond</keyword>
<keyword id="KW-0255">Endonuclease</keyword>
<keyword id="KW-0325">Glycoprotein</keyword>
<keyword id="KW-0378">Hydrolase</keyword>
<keyword id="KW-0456">Lyase</keyword>
<keyword id="KW-0540">Nuclease</keyword>
<keyword id="KW-0964">Secreted</keyword>
<feature type="chain" id="PRO_0000057176" description="Ribonuclease pancreatic">
    <location>
        <begin position="1"/>
        <end position="124"/>
    </location>
</feature>
<feature type="region of interest" description="Disordered" evidence="2">
    <location>
        <begin position="1"/>
        <end position="24"/>
    </location>
</feature>
<feature type="compositionally biased region" description="Basic and acidic residues" evidence="2">
    <location>
        <begin position="1"/>
        <end position="13"/>
    </location>
</feature>
<feature type="active site" description="Proton acceptor" evidence="1">
    <location>
        <position position="12"/>
    </location>
</feature>
<feature type="active site" description="Proton donor" evidence="1">
    <location>
        <position position="119"/>
    </location>
</feature>
<feature type="binding site" evidence="1">
    <location>
        <position position="7"/>
    </location>
    <ligand>
        <name>substrate</name>
    </ligand>
</feature>
<feature type="binding site" evidence="1">
    <location>
        <position position="10"/>
    </location>
    <ligand>
        <name>substrate</name>
    </ligand>
</feature>
<feature type="binding site" evidence="1">
    <location>
        <begin position="41"/>
        <end position="45"/>
    </location>
    <ligand>
        <name>substrate</name>
    </ligand>
</feature>
<feature type="binding site" evidence="1">
    <location>
        <position position="66"/>
    </location>
    <ligand>
        <name>substrate</name>
    </ligand>
</feature>
<feature type="binding site" evidence="1">
    <location>
        <position position="85"/>
    </location>
    <ligand>
        <name>substrate</name>
    </ligand>
</feature>
<feature type="glycosylation site" description="N-linked (GlcNAc...) asparagine; partial" evidence="3">
    <location>
        <position position="34"/>
    </location>
</feature>
<feature type="disulfide bond" evidence="1">
    <location>
        <begin position="26"/>
        <end position="84"/>
    </location>
</feature>
<feature type="disulfide bond" evidence="1">
    <location>
        <begin position="40"/>
        <end position="95"/>
    </location>
</feature>
<feature type="disulfide bond" evidence="1">
    <location>
        <begin position="58"/>
        <end position="110"/>
    </location>
</feature>
<feature type="disulfide bond" evidence="1">
    <location>
        <begin position="65"/>
        <end position="72"/>
    </location>
</feature>
<gene>
    <name type="primary">RNASE1</name>
    <name type="synonym">RNS1</name>
</gene>
<accession>P07847</accession>
<reference key="1">
    <citation type="journal article" date="1980" name="Biochim. Biophys. Acta">
        <title>Primary structures of pancreatic ribonucleases from Bovidae. Impala, Thomson's gazelle, nilgai and water buffalo.</title>
        <authorList>
            <person name="Beintema J.J."/>
        </authorList>
    </citation>
    <scope>PROTEIN SEQUENCE</scope>
    <scope>GLYCOSYLATION AT ASN-34</scope>
    <source>
        <tissue>Pancreas</tissue>
    </source>
</reference>
<organism>
    <name type="scientific">Aepyceros melampus</name>
    <name type="common">Impala</name>
    <dbReference type="NCBI Taxonomy" id="9897"/>
    <lineage>
        <taxon>Eukaryota</taxon>
        <taxon>Metazoa</taxon>
        <taxon>Chordata</taxon>
        <taxon>Craniata</taxon>
        <taxon>Vertebrata</taxon>
        <taxon>Euteleostomi</taxon>
        <taxon>Mammalia</taxon>
        <taxon>Eutheria</taxon>
        <taxon>Laurasiatheria</taxon>
        <taxon>Artiodactyla</taxon>
        <taxon>Ruminantia</taxon>
        <taxon>Pecora</taxon>
        <taxon>Bovidae</taxon>
        <taxon>Aepycerotinae</taxon>
        <taxon>Aepyceros</taxon>
    </lineage>
</organism>
<comment type="function">
    <text evidence="1">Endonuclease that catalyzes the cleavage of RNA on the 3' side of pyrimidine nucleotides. Acts on single-stranded and double-stranded RNA (By similarity).</text>
</comment>
<comment type="catalytic activity">
    <reaction>
        <text>an [RNA] containing cytidine + H2O = an [RNA]-3'-cytidine-3'-phosphate + a 5'-hydroxy-ribonucleotide-3'-[RNA].</text>
        <dbReference type="EC" id="4.6.1.18"/>
    </reaction>
</comment>
<comment type="catalytic activity">
    <reaction>
        <text>an [RNA] containing uridine + H2O = an [RNA]-3'-uridine-3'-phosphate + a 5'-hydroxy-ribonucleotide-3'-[RNA].</text>
        <dbReference type="EC" id="4.6.1.18"/>
    </reaction>
</comment>
<comment type="subunit">
    <text evidence="1">Monomer. Interacts with and forms tight 1:1 complexes with RNH1. Dimerization of two such complexes may occur. Interaction with RNH1 inhibits this protein (By similarity).</text>
</comment>
<comment type="subcellular location">
    <subcellularLocation>
        <location>Secreted</location>
    </subcellularLocation>
</comment>
<comment type="tissue specificity">
    <text>Pancreas.</text>
</comment>
<comment type="similarity">
    <text evidence="4">Belongs to the pancreatic ribonuclease family.</text>
</comment>